<gene>
    <name evidence="1" type="primary">prfA</name>
    <name type="ordered locus">Hhal_0994</name>
</gene>
<organism>
    <name type="scientific">Halorhodospira halophila (strain DSM 244 / SL1)</name>
    <name type="common">Ectothiorhodospira halophila (strain DSM 244 / SL1)</name>
    <dbReference type="NCBI Taxonomy" id="349124"/>
    <lineage>
        <taxon>Bacteria</taxon>
        <taxon>Pseudomonadati</taxon>
        <taxon>Pseudomonadota</taxon>
        <taxon>Gammaproteobacteria</taxon>
        <taxon>Chromatiales</taxon>
        <taxon>Ectothiorhodospiraceae</taxon>
        <taxon>Halorhodospira</taxon>
    </lineage>
</organism>
<evidence type="ECO:0000255" key="1">
    <source>
        <dbReference type="HAMAP-Rule" id="MF_00093"/>
    </source>
</evidence>
<evidence type="ECO:0000256" key="2">
    <source>
        <dbReference type="SAM" id="MobiDB-lite"/>
    </source>
</evidence>
<keyword id="KW-0963">Cytoplasm</keyword>
<keyword id="KW-0488">Methylation</keyword>
<keyword id="KW-0648">Protein biosynthesis</keyword>
<keyword id="KW-1185">Reference proteome</keyword>
<accession>A1WVQ8</accession>
<sequence length="363" mass="40311">MKATIRNKLERMAERHEEIGAQLADPDVVGDPSKFAELSREYARLEPVVQDLNAYRAEADTVASAEAMLNDGDAEIRALAEQELAEAQRRLEELEGALQRHLVPTDPNDQRNIFLEVRAGAGGDEAALFAGDLLRMYMRYAERQGWKTEILSAREGEHGGYREVIARVSGRSVYARLKFESGAHRVQRVPATESQGRIHTSACTVAILPELDEVSAIEVNTADLRVDTFRSSGAGGQHVNTTDSAIRITHLPSGLVVECQDERSQNKNRAKAIALLQARLTEQERAKQQSERSEQRRLAVGSGDRSERIRTYNFPQGRVTDHRIGLTLYKLEQVMEGGMDELLDGLTQEHQAEALAEIAEDSG</sequence>
<proteinExistence type="inferred from homology"/>
<feature type="chain" id="PRO_1000004896" description="Peptide chain release factor 1">
    <location>
        <begin position="1"/>
        <end position="363"/>
    </location>
</feature>
<feature type="region of interest" description="Disordered" evidence="2">
    <location>
        <begin position="284"/>
        <end position="306"/>
    </location>
</feature>
<feature type="compositionally biased region" description="Basic and acidic residues" evidence="2">
    <location>
        <begin position="284"/>
        <end position="297"/>
    </location>
</feature>
<feature type="modified residue" description="N5-methylglutamine" evidence="1">
    <location>
        <position position="237"/>
    </location>
</feature>
<protein>
    <recommendedName>
        <fullName evidence="1">Peptide chain release factor 1</fullName>
        <shortName evidence="1">RF-1</shortName>
    </recommendedName>
</protein>
<comment type="function">
    <text evidence="1">Peptide chain release factor 1 directs the termination of translation in response to the peptide chain termination codons UAG and UAA.</text>
</comment>
<comment type="subcellular location">
    <subcellularLocation>
        <location evidence="1">Cytoplasm</location>
    </subcellularLocation>
</comment>
<comment type="PTM">
    <text evidence="1">Methylated by PrmC. Methylation increases the termination efficiency of RF1.</text>
</comment>
<comment type="similarity">
    <text evidence="1">Belongs to the prokaryotic/mitochondrial release factor family.</text>
</comment>
<name>RF1_HALHL</name>
<reference key="1">
    <citation type="submission" date="2006-12" db="EMBL/GenBank/DDBJ databases">
        <title>Complete sequence of Halorhodospira halophila SL1.</title>
        <authorList>
            <consortium name="US DOE Joint Genome Institute"/>
            <person name="Copeland A."/>
            <person name="Lucas S."/>
            <person name="Lapidus A."/>
            <person name="Barry K."/>
            <person name="Detter J.C."/>
            <person name="Glavina del Rio T."/>
            <person name="Hammon N."/>
            <person name="Israni S."/>
            <person name="Dalin E."/>
            <person name="Tice H."/>
            <person name="Pitluck S."/>
            <person name="Saunders E."/>
            <person name="Brettin T."/>
            <person name="Bruce D."/>
            <person name="Han C."/>
            <person name="Tapia R."/>
            <person name="Schmutz J."/>
            <person name="Larimer F."/>
            <person name="Land M."/>
            <person name="Hauser L."/>
            <person name="Kyrpides N."/>
            <person name="Mikhailova N."/>
            <person name="Hoff W."/>
            <person name="Richardson P."/>
        </authorList>
    </citation>
    <scope>NUCLEOTIDE SEQUENCE [LARGE SCALE GENOMIC DNA]</scope>
    <source>
        <strain>DSM 244 / SL1</strain>
    </source>
</reference>
<dbReference type="EMBL" id="CP000544">
    <property type="protein sequence ID" value="ABM61770.1"/>
    <property type="molecule type" value="Genomic_DNA"/>
</dbReference>
<dbReference type="RefSeq" id="WP_011813793.1">
    <property type="nucleotide sequence ID" value="NC_008789.1"/>
</dbReference>
<dbReference type="SMR" id="A1WVQ8"/>
<dbReference type="STRING" id="349124.Hhal_0994"/>
<dbReference type="KEGG" id="hha:Hhal_0994"/>
<dbReference type="eggNOG" id="COG0216">
    <property type="taxonomic scope" value="Bacteria"/>
</dbReference>
<dbReference type="HOGENOM" id="CLU_036856_0_1_6"/>
<dbReference type="OrthoDB" id="9806673at2"/>
<dbReference type="Proteomes" id="UP000000647">
    <property type="component" value="Chromosome"/>
</dbReference>
<dbReference type="GO" id="GO:0005737">
    <property type="term" value="C:cytoplasm"/>
    <property type="evidence" value="ECO:0007669"/>
    <property type="project" value="UniProtKB-SubCell"/>
</dbReference>
<dbReference type="GO" id="GO:0016149">
    <property type="term" value="F:translation release factor activity, codon specific"/>
    <property type="evidence" value="ECO:0007669"/>
    <property type="project" value="UniProtKB-UniRule"/>
</dbReference>
<dbReference type="FunFam" id="3.30.160.20:FF:000004">
    <property type="entry name" value="Peptide chain release factor 1"/>
    <property type="match status" value="1"/>
</dbReference>
<dbReference type="FunFam" id="3.30.70.1660:FF:000002">
    <property type="entry name" value="Peptide chain release factor 1"/>
    <property type="match status" value="1"/>
</dbReference>
<dbReference type="FunFam" id="3.30.70.1660:FF:000004">
    <property type="entry name" value="Peptide chain release factor 1"/>
    <property type="match status" value="1"/>
</dbReference>
<dbReference type="Gene3D" id="3.30.160.20">
    <property type="match status" value="1"/>
</dbReference>
<dbReference type="Gene3D" id="3.30.70.1660">
    <property type="match status" value="1"/>
</dbReference>
<dbReference type="Gene3D" id="6.10.140.1950">
    <property type="match status" value="1"/>
</dbReference>
<dbReference type="HAMAP" id="MF_00093">
    <property type="entry name" value="Rel_fac_1"/>
    <property type="match status" value="1"/>
</dbReference>
<dbReference type="InterPro" id="IPR005139">
    <property type="entry name" value="PCRF"/>
</dbReference>
<dbReference type="InterPro" id="IPR000352">
    <property type="entry name" value="Pep_chain_release_fac_I"/>
</dbReference>
<dbReference type="InterPro" id="IPR045853">
    <property type="entry name" value="Pep_chain_release_fac_I_sf"/>
</dbReference>
<dbReference type="InterPro" id="IPR050057">
    <property type="entry name" value="Prokaryotic/Mito_RF"/>
</dbReference>
<dbReference type="InterPro" id="IPR004373">
    <property type="entry name" value="RF-1"/>
</dbReference>
<dbReference type="NCBIfam" id="TIGR00019">
    <property type="entry name" value="prfA"/>
    <property type="match status" value="1"/>
</dbReference>
<dbReference type="NCBIfam" id="NF001859">
    <property type="entry name" value="PRK00591.1"/>
    <property type="match status" value="1"/>
</dbReference>
<dbReference type="PANTHER" id="PTHR43804">
    <property type="entry name" value="LD18447P"/>
    <property type="match status" value="1"/>
</dbReference>
<dbReference type="PANTHER" id="PTHR43804:SF7">
    <property type="entry name" value="LD18447P"/>
    <property type="match status" value="1"/>
</dbReference>
<dbReference type="Pfam" id="PF03462">
    <property type="entry name" value="PCRF"/>
    <property type="match status" value="1"/>
</dbReference>
<dbReference type="Pfam" id="PF00472">
    <property type="entry name" value="RF-1"/>
    <property type="match status" value="1"/>
</dbReference>
<dbReference type="SMART" id="SM00937">
    <property type="entry name" value="PCRF"/>
    <property type="match status" value="1"/>
</dbReference>
<dbReference type="SUPFAM" id="SSF75620">
    <property type="entry name" value="Release factor"/>
    <property type="match status" value="1"/>
</dbReference>
<dbReference type="PROSITE" id="PS00745">
    <property type="entry name" value="RF_PROK_I"/>
    <property type="match status" value="1"/>
</dbReference>